<comment type="function">
    <text evidence="1">Catalyzes the initial step of the lipid cycle reactions in the biosynthesis of the cell wall peptidoglycan: transfers peptidoglycan precursor phospho-MurNAc-pentapeptide from UDP-MurNAc-pentapeptide onto the lipid carrier undecaprenyl phosphate, yielding undecaprenyl-pyrophosphoryl-MurNAc-pentapeptide, known as lipid I.</text>
</comment>
<comment type="catalytic activity">
    <reaction evidence="1">
        <text>UDP-N-acetyl-alpha-D-muramoyl-L-alanyl-gamma-D-glutamyl-meso-2,6-diaminopimeloyl-D-alanyl-D-alanine + di-trans,octa-cis-undecaprenyl phosphate = di-trans,octa-cis-undecaprenyl diphospho-N-acetyl-alpha-D-muramoyl-L-alanyl-D-glutamyl-meso-2,6-diaminopimeloyl-D-alanyl-D-alanine + UMP</text>
        <dbReference type="Rhea" id="RHEA:28386"/>
        <dbReference type="ChEBI" id="CHEBI:57865"/>
        <dbReference type="ChEBI" id="CHEBI:60392"/>
        <dbReference type="ChEBI" id="CHEBI:61386"/>
        <dbReference type="ChEBI" id="CHEBI:61387"/>
        <dbReference type="EC" id="2.7.8.13"/>
    </reaction>
</comment>
<comment type="cofactor">
    <cofactor evidence="1">
        <name>Mg(2+)</name>
        <dbReference type="ChEBI" id="CHEBI:18420"/>
    </cofactor>
</comment>
<comment type="pathway">
    <text evidence="1">Cell wall biogenesis; peptidoglycan biosynthesis.</text>
</comment>
<comment type="subcellular location">
    <subcellularLocation>
        <location evidence="1">Cell inner membrane</location>
        <topology evidence="1">Multi-pass membrane protein</topology>
    </subcellularLocation>
</comment>
<comment type="similarity">
    <text evidence="1">Belongs to the glycosyltransferase 4 family. MraY subfamily.</text>
</comment>
<protein>
    <recommendedName>
        <fullName evidence="1">Phospho-N-acetylmuramoyl-pentapeptide-transferase</fullName>
        <ecNumber evidence="1">2.7.8.13</ecNumber>
    </recommendedName>
    <alternativeName>
        <fullName evidence="1">UDP-MurNAc-pentapeptide phosphotransferase</fullName>
    </alternativeName>
</protein>
<organism>
    <name type="scientific">Actinobacillus pleuropneumoniae serotype 5b (strain L20)</name>
    <dbReference type="NCBI Taxonomy" id="416269"/>
    <lineage>
        <taxon>Bacteria</taxon>
        <taxon>Pseudomonadati</taxon>
        <taxon>Pseudomonadota</taxon>
        <taxon>Gammaproteobacteria</taxon>
        <taxon>Pasteurellales</taxon>
        <taxon>Pasteurellaceae</taxon>
        <taxon>Actinobacillus</taxon>
    </lineage>
</organism>
<accession>A3MY87</accession>
<sequence>MLVWLAEYLVQYNTAFNVVSYITFRAIMALLTAMGIGLWIGPEVIRRLQLLKFGQEVRNDGPESHFKKRGTPTMGGIMILIAIGVSTLLWADLRNSYIWFVLFVLFGYGAVGFVDDYWKIKRKNTDGLIARWKYFWLSVIALIAVFGIYAVGKDTAATQLVVPFFKDVMPQLGIFFIILSYFVIVGTSNAVNLTDGLDGLAIVPTIMVASAFALIAWATGNFNFAQYLHIPFVPNAGELVILCTAIVGAGLGFLWYNTYPAQVFMGDVGSLSLGGALGTIAVLVRQELLLVIMGGVFVVEALSVILQVGSYKLRQKRIFRMAPIHHHFELKGWPEPRVIVRFWIITLMLVLIGLVTLKLR</sequence>
<feature type="chain" id="PRO_1000002930" description="Phospho-N-acetylmuramoyl-pentapeptide-transferase">
    <location>
        <begin position="1"/>
        <end position="360"/>
    </location>
</feature>
<feature type="transmembrane region" description="Helical" evidence="1">
    <location>
        <begin position="21"/>
        <end position="41"/>
    </location>
</feature>
<feature type="transmembrane region" description="Helical" evidence="1">
    <location>
        <begin position="73"/>
        <end position="93"/>
    </location>
</feature>
<feature type="transmembrane region" description="Helical" evidence="1">
    <location>
        <begin position="98"/>
        <end position="118"/>
    </location>
</feature>
<feature type="transmembrane region" description="Helical" evidence="1">
    <location>
        <begin position="132"/>
        <end position="152"/>
    </location>
</feature>
<feature type="transmembrane region" description="Helical" evidence="1">
    <location>
        <begin position="168"/>
        <end position="188"/>
    </location>
</feature>
<feature type="transmembrane region" description="Helical" evidence="1">
    <location>
        <begin position="199"/>
        <end position="219"/>
    </location>
</feature>
<feature type="transmembrane region" description="Helical" evidence="1">
    <location>
        <begin position="236"/>
        <end position="256"/>
    </location>
</feature>
<feature type="transmembrane region" description="Helical" evidence="1">
    <location>
        <begin position="263"/>
        <end position="283"/>
    </location>
</feature>
<feature type="transmembrane region" description="Helical" evidence="1">
    <location>
        <begin position="288"/>
        <end position="308"/>
    </location>
</feature>
<feature type="transmembrane region" description="Helical" evidence="1">
    <location>
        <begin position="338"/>
        <end position="358"/>
    </location>
</feature>
<dbReference type="EC" id="2.7.8.13" evidence="1"/>
<dbReference type="EMBL" id="CP000569">
    <property type="protein sequence ID" value="ABN73123.1"/>
    <property type="molecule type" value="Genomic_DNA"/>
</dbReference>
<dbReference type="RefSeq" id="WP_009874740.1">
    <property type="nucleotide sequence ID" value="NC_009053.1"/>
</dbReference>
<dbReference type="SMR" id="A3MY87"/>
<dbReference type="STRING" id="416269.APL_0015"/>
<dbReference type="EnsemblBacteria" id="ABN73123">
    <property type="protein sequence ID" value="ABN73123"/>
    <property type="gene ID" value="APL_0015"/>
</dbReference>
<dbReference type="KEGG" id="apl:APL_0015"/>
<dbReference type="PATRIC" id="fig|416269.6.peg.17"/>
<dbReference type="eggNOG" id="COG0472">
    <property type="taxonomic scope" value="Bacteria"/>
</dbReference>
<dbReference type="HOGENOM" id="CLU_023982_0_0_6"/>
<dbReference type="UniPathway" id="UPA00219"/>
<dbReference type="Proteomes" id="UP000001432">
    <property type="component" value="Chromosome"/>
</dbReference>
<dbReference type="GO" id="GO:0005886">
    <property type="term" value="C:plasma membrane"/>
    <property type="evidence" value="ECO:0007669"/>
    <property type="project" value="UniProtKB-SubCell"/>
</dbReference>
<dbReference type="GO" id="GO:0046872">
    <property type="term" value="F:metal ion binding"/>
    <property type="evidence" value="ECO:0007669"/>
    <property type="project" value="UniProtKB-KW"/>
</dbReference>
<dbReference type="GO" id="GO:0008963">
    <property type="term" value="F:phospho-N-acetylmuramoyl-pentapeptide-transferase activity"/>
    <property type="evidence" value="ECO:0007669"/>
    <property type="project" value="UniProtKB-UniRule"/>
</dbReference>
<dbReference type="GO" id="GO:0051992">
    <property type="term" value="F:UDP-N-acetylmuramoyl-L-alanyl-D-glutamyl-meso-2,6-diaminopimelyl-D-alanyl-D-alanine:undecaprenyl-phosphate transferase activity"/>
    <property type="evidence" value="ECO:0007669"/>
    <property type="project" value="RHEA"/>
</dbReference>
<dbReference type="GO" id="GO:0051301">
    <property type="term" value="P:cell division"/>
    <property type="evidence" value="ECO:0007669"/>
    <property type="project" value="UniProtKB-KW"/>
</dbReference>
<dbReference type="GO" id="GO:0071555">
    <property type="term" value="P:cell wall organization"/>
    <property type="evidence" value="ECO:0007669"/>
    <property type="project" value="UniProtKB-KW"/>
</dbReference>
<dbReference type="GO" id="GO:0009252">
    <property type="term" value="P:peptidoglycan biosynthetic process"/>
    <property type="evidence" value="ECO:0007669"/>
    <property type="project" value="UniProtKB-UniRule"/>
</dbReference>
<dbReference type="GO" id="GO:0008360">
    <property type="term" value="P:regulation of cell shape"/>
    <property type="evidence" value="ECO:0007669"/>
    <property type="project" value="UniProtKB-KW"/>
</dbReference>
<dbReference type="CDD" id="cd06852">
    <property type="entry name" value="GT_MraY"/>
    <property type="match status" value="1"/>
</dbReference>
<dbReference type="HAMAP" id="MF_00038">
    <property type="entry name" value="MraY"/>
    <property type="match status" value="1"/>
</dbReference>
<dbReference type="InterPro" id="IPR000715">
    <property type="entry name" value="Glycosyl_transferase_4"/>
</dbReference>
<dbReference type="InterPro" id="IPR003524">
    <property type="entry name" value="PNAcMuramoyl-5peptid_Trfase"/>
</dbReference>
<dbReference type="InterPro" id="IPR018480">
    <property type="entry name" value="PNAcMuramoyl-5peptid_Trfase_CS"/>
</dbReference>
<dbReference type="NCBIfam" id="TIGR00445">
    <property type="entry name" value="mraY"/>
    <property type="match status" value="1"/>
</dbReference>
<dbReference type="PANTHER" id="PTHR22926">
    <property type="entry name" value="PHOSPHO-N-ACETYLMURAMOYL-PENTAPEPTIDE-TRANSFERASE"/>
    <property type="match status" value="1"/>
</dbReference>
<dbReference type="PANTHER" id="PTHR22926:SF5">
    <property type="entry name" value="PHOSPHO-N-ACETYLMURAMOYL-PENTAPEPTIDE-TRANSFERASE HOMOLOG"/>
    <property type="match status" value="1"/>
</dbReference>
<dbReference type="Pfam" id="PF00953">
    <property type="entry name" value="Glycos_transf_4"/>
    <property type="match status" value="1"/>
</dbReference>
<dbReference type="Pfam" id="PF10555">
    <property type="entry name" value="MraY_sig1"/>
    <property type="match status" value="1"/>
</dbReference>
<dbReference type="PROSITE" id="PS01347">
    <property type="entry name" value="MRAY_1"/>
    <property type="match status" value="1"/>
</dbReference>
<dbReference type="PROSITE" id="PS01348">
    <property type="entry name" value="MRAY_2"/>
    <property type="match status" value="1"/>
</dbReference>
<reference key="1">
    <citation type="journal article" date="2008" name="J. Bacteriol.">
        <title>The complete genome sequence of Actinobacillus pleuropneumoniae L20 (serotype 5b).</title>
        <authorList>
            <person name="Foote S.J."/>
            <person name="Bosse J.T."/>
            <person name="Bouevitch A.B."/>
            <person name="Langford P.R."/>
            <person name="Young N.M."/>
            <person name="Nash J.H.E."/>
        </authorList>
    </citation>
    <scope>NUCLEOTIDE SEQUENCE [LARGE SCALE GENOMIC DNA]</scope>
    <source>
        <strain>L20</strain>
    </source>
</reference>
<proteinExistence type="inferred from homology"/>
<keyword id="KW-0131">Cell cycle</keyword>
<keyword id="KW-0132">Cell division</keyword>
<keyword id="KW-0997">Cell inner membrane</keyword>
<keyword id="KW-1003">Cell membrane</keyword>
<keyword id="KW-0133">Cell shape</keyword>
<keyword id="KW-0961">Cell wall biogenesis/degradation</keyword>
<keyword id="KW-0460">Magnesium</keyword>
<keyword id="KW-0472">Membrane</keyword>
<keyword id="KW-0479">Metal-binding</keyword>
<keyword id="KW-0573">Peptidoglycan synthesis</keyword>
<keyword id="KW-1185">Reference proteome</keyword>
<keyword id="KW-0808">Transferase</keyword>
<keyword id="KW-0812">Transmembrane</keyword>
<keyword id="KW-1133">Transmembrane helix</keyword>
<evidence type="ECO:0000255" key="1">
    <source>
        <dbReference type="HAMAP-Rule" id="MF_00038"/>
    </source>
</evidence>
<gene>
    <name evidence="1" type="primary">mraY</name>
    <name type="ordered locus">APL_0015</name>
</gene>
<name>MRAY_ACTP2</name>